<comment type="function">
    <text evidence="1">The biological conversion of cellulose to glucose generally requires three types of hydrolytic enzymes: (1) Endoglucanases which cut internal beta-1,4-glucosidic bonds; (2) Exocellobiohydrolases that cut the disaccharide cellobiose from the non-reducing end of the cellulose polymer chain; (3) Beta-1,4-glucosidases which hydrolyze the cellobiose and other short cello-oligosaccharides to glucose.</text>
</comment>
<comment type="catalytic activity">
    <reaction>
        <text>Hydrolysis of (1-&gt;4)-beta-D-glucosidic linkages in cellulose and cellotetraose, releasing cellobiose from the non-reducing ends of the chains.</text>
        <dbReference type="EC" id="3.2.1.91"/>
    </reaction>
</comment>
<comment type="subcellular location">
    <subcellularLocation>
        <location evidence="1">Secreted</location>
    </subcellularLocation>
</comment>
<comment type="domain">
    <text>Has a modular structure: a carbohydrate-binding module (CBM) at the N-terminus, a linker rich in threonines, and a C-terminal exocellobiohydrolase catalytic module. The genes for catalytic modules and CBMs seem to have evolved separately and have been linked by gene fusion.</text>
</comment>
<comment type="similarity">
    <text evidence="7">Belongs to the glycosyl hydrolase 6 (cellulase B) family.</text>
</comment>
<name>CBHC_ASPFC</name>
<accession>B0XWL3</accession>
<sequence length="454" mass="47796">MKHLASSIALTLLLPAVQAQQTVWGQCGGQGWSGPTSCVAGAACSTLNPYYAQCIPGATATSTTLTTTTAATTTSQTTTKPTTTGPTTSAPTVTASGNPFSGYQLYANPYYSSEVHTLAMPSLPSSLQPKASAVAEVPSFVWLDVAAKVPTMGTYLADIQAKNKAGANPPIAGIFVVYDLPDRDCAALASNGEYSIANNGVANYKAYIDAIRAQLVKYSDVHTILVIEPDSLANLVTNLNVAKCANAQSAYLECVDYALKQLNLPNVAMYLDAGHAGWLGWPANLGPAATLFAKVYTDAGSPAAVRGLATNVANYNAWSLSTCPSYTQGDPNCDEKKYINAMAPLLKEAGFDAHFIMDTSRNGVQPTKQNAWGDWCNVIGTGFGVRPSTNTGDPLQDAFVWIKPGGESDGTSNSTSPRYDAHCGYSDALQPAPEAGTWFQAYFEQLLTNANPSF</sequence>
<protein>
    <recommendedName>
        <fullName>Probable 1,4-beta-D-glucan cellobiohydrolase C</fullName>
        <ecNumber>3.2.1.91</ecNumber>
    </recommendedName>
    <alternativeName>
        <fullName>Beta-glucancellobiohydrolase C</fullName>
    </alternativeName>
    <alternativeName>
        <fullName>Exocellobiohydrolase C</fullName>
    </alternativeName>
    <alternativeName>
        <fullName>Exoglucanase C</fullName>
    </alternativeName>
</protein>
<evidence type="ECO:0000250" key="1"/>
<evidence type="ECO:0000255" key="2"/>
<evidence type="ECO:0000255" key="3">
    <source>
        <dbReference type="PROSITE-ProRule" id="PRU00597"/>
    </source>
</evidence>
<evidence type="ECO:0000255" key="4">
    <source>
        <dbReference type="PROSITE-ProRule" id="PRU10056"/>
    </source>
</evidence>
<evidence type="ECO:0000255" key="5">
    <source>
        <dbReference type="PROSITE-ProRule" id="PRU10057"/>
    </source>
</evidence>
<evidence type="ECO:0000256" key="6">
    <source>
        <dbReference type="SAM" id="MobiDB-lite"/>
    </source>
</evidence>
<evidence type="ECO:0000305" key="7"/>
<gene>
    <name type="primary">cbhC</name>
    <name type="ORF">AFUB_046510</name>
</gene>
<keyword id="KW-0119">Carbohydrate metabolism</keyword>
<keyword id="KW-0136">Cellulose degradation</keyword>
<keyword id="KW-1015">Disulfide bond</keyword>
<keyword id="KW-0325">Glycoprotein</keyword>
<keyword id="KW-0326">Glycosidase</keyword>
<keyword id="KW-0378">Hydrolase</keyword>
<keyword id="KW-0624">Polysaccharide degradation</keyword>
<keyword id="KW-0964">Secreted</keyword>
<keyword id="KW-0732">Signal</keyword>
<dbReference type="EC" id="3.2.1.91"/>
<dbReference type="EMBL" id="DS499596">
    <property type="protein sequence ID" value="EDP53472.1"/>
    <property type="molecule type" value="Genomic_DNA"/>
</dbReference>
<dbReference type="SMR" id="B0XWL3"/>
<dbReference type="GlyCosmos" id="B0XWL3">
    <property type="glycosylation" value="1 site, No reported glycans"/>
</dbReference>
<dbReference type="EnsemblFungi" id="EDP53472">
    <property type="protein sequence ID" value="EDP53472"/>
    <property type="gene ID" value="AFUB_046510"/>
</dbReference>
<dbReference type="VEuPathDB" id="FungiDB:AFUB_046510"/>
<dbReference type="HOGENOM" id="CLU_015488_0_0_1"/>
<dbReference type="OrthoDB" id="70194at5052"/>
<dbReference type="PhylomeDB" id="B0XWL3"/>
<dbReference type="Proteomes" id="UP000001699">
    <property type="component" value="Unassembled WGS sequence"/>
</dbReference>
<dbReference type="GO" id="GO:0005576">
    <property type="term" value="C:extracellular region"/>
    <property type="evidence" value="ECO:0007669"/>
    <property type="project" value="UniProtKB-SubCell"/>
</dbReference>
<dbReference type="GO" id="GO:0016162">
    <property type="term" value="F:cellulose 1,4-beta-cellobiosidase activity"/>
    <property type="evidence" value="ECO:0007669"/>
    <property type="project" value="UniProtKB-EC"/>
</dbReference>
<dbReference type="GO" id="GO:0030248">
    <property type="term" value="F:cellulose binding"/>
    <property type="evidence" value="ECO:0007669"/>
    <property type="project" value="InterPro"/>
</dbReference>
<dbReference type="GO" id="GO:0030245">
    <property type="term" value="P:cellulose catabolic process"/>
    <property type="evidence" value="ECO:0007669"/>
    <property type="project" value="UniProtKB-KW"/>
</dbReference>
<dbReference type="FunFam" id="3.20.20.40:FF:000001">
    <property type="entry name" value="Glucanase"/>
    <property type="match status" value="1"/>
</dbReference>
<dbReference type="Gene3D" id="3.20.20.40">
    <property type="entry name" value="1, 4-beta cellobiohydrolase"/>
    <property type="match status" value="1"/>
</dbReference>
<dbReference type="InterPro" id="IPR016288">
    <property type="entry name" value="Beta_cellobiohydrolase"/>
</dbReference>
<dbReference type="InterPro" id="IPR036434">
    <property type="entry name" value="Beta_cellobiohydrolase_sf"/>
</dbReference>
<dbReference type="InterPro" id="IPR035971">
    <property type="entry name" value="CBD_sf"/>
</dbReference>
<dbReference type="InterPro" id="IPR000254">
    <property type="entry name" value="Cellulose-bd_dom_fun"/>
</dbReference>
<dbReference type="InterPro" id="IPR001524">
    <property type="entry name" value="Glyco_hydro_6_CS"/>
</dbReference>
<dbReference type="PANTHER" id="PTHR34876">
    <property type="match status" value="1"/>
</dbReference>
<dbReference type="PANTHER" id="PTHR34876:SF4">
    <property type="entry name" value="1,4-BETA-D-GLUCAN CELLOBIOHYDROLASE C-RELATED"/>
    <property type="match status" value="1"/>
</dbReference>
<dbReference type="Pfam" id="PF00734">
    <property type="entry name" value="CBM_1"/>
    <property type="match status" value="1"/>
</dbReference>
<dbReference type="Pfam" id="PF01341">
    <property type="entry name" value="Glyco_hydro_6"/>
    <property type="match status" value="1"/>
</dbReference>
<dbReference type="PIRSF" id="PIRSF001100">
    <property type="entry name" value="Beta_cellobiohydrolase"/>
    <property type="match status" value="1"/>
</dbReference>
<dbReference type="PRINTS" id="PR00733">
    <property type="entry name" value="GLHYDRLASE6"/>
</dbReference>
<dbReference type="SMART" id="SM00236">
    <property type="entry name" value="fCBD"/>
    <property type="match status" value="1"/>
</dbReference>
<dbReference type="SUPFAM" id="SSF57180">
    <property type="entry name" value="Cellulose-binding domain"/>
    <property type="match status" value="1"/>
</dbReference>
<dbReference type="SUPFAM" id="SSF51989">
    <property type="entry name" value="Glycosyl hydrolases family 6, cellulases"/>
    <property type="match status" value="1"/>
</dbReference>
<dbReference type="PROSITE" id="PS00562">
    <property type="entry name" value="CBM1_1"/>
    <property type="match status" value="1"/>
</dbReference>
<dbReference type="PROSITE" id="PS51164">
    <property type="entry name" value="CBM1_2"/>
    <property type="match status" value="1"/>
</dbReference>
<dbReference type="PROSITE" id="PS00655">
    <property type="entry name" value="GLYCOSYL_HYDROL_F6_1"/>
    <property type="match status" value="1"/>
</dbReference>
<dbReference type="PROSITE" id="PS00656">
    <property type="entry name" value="GLYCOSYL_HYDROL_F6_2"/>
    <property type="match status" value="1"/>
</dbReference>
<feature type="signal peptide" evidence="2">
    <location>
        <begin position="1"/>
        <end position="19"/>
    </location>
</feature>
<feature type="chain" id="PRO_0000394050" description="Probable 1,4-beta-D-glucan cellobiohydrolase C">
    <location>
        <begin position="20"/>
        <end position="454"/>
    </location>
</feature>
<feature type="domain" description="CBM1" evidence="3">
    <location>
        <begin position="20"/>
        <end position="55"/>
    </location>
</feature>
<feature type="region of interest" description="Thr-rich linker">
    <location>
        <begin position="59"/>
        <end position="94"/>
    </location>
</feature>
<feature type="region of interest" description="Disordered" evidence="6">
    <location>
        <begin position="68"/>
        <end position="95"/>
    </location>
</feature>
<feature type="region of interest" description="Thr-rich linker">
    <location>
        <begin position="95"/>
        <end position="454"/>
    </location>
</feature>
<feature type="active site" evidence="4">
    <location>
        <position position="184"/>
    </location>
</feature>
<feature type="active site" description="Proton donor" evidence="5">
    <location>
        <position position="230"/>
    </location>
</feature>
<feature type="active site" description="Nucleophile" evidence="4">
    <location>
        <position position="409"/>
    </location>
</feature>
<feature type="glycosylation site" description="N-linked (GlcNAc...) asparagine" evidence="2">
    <location>
        <position position="413"/>
    </location>
</feature>
<feature type="disulfide bond" evidence="1">
    <location>
        <begin position="27"/>
        <end position="44"/>
    </location>
</feature>
<feature type="disulfide bond" evidence="1">
    <location>
        <begin position="38"/>
        <end position="54"/>
    </location>
</feature>
<feature type="disulfide bond" evidence="1">
    <location>
        <begin position="185"/>
        <end position="244"/>
    </location>
</feature>
<feature type="disulfide bond" evidence="1">
    <location>
        <begin position="376"/>
        <end position="423"/>
    </location>
</feature>
<proteinExistence type="inferred from homology"/>
<organism>
    <name type="scientific">Aspergillus fumigatus (strain CBS 144.89 / FGSC A1163 / CEA10)</name>
    <name type="common">Neosartorya fumigata</name>
    <dbReference type="NCBI Taxonomy" id="451804"/>
    <lineage>
        <taxon>Eukaryota</taxon>
        <taxon>Fungi</taxon>
        <taxon>Dikarya</taxon>
        <taxon>Ascomycota</taxon>
        <taxon>Pezizomycotina</taxon>
        <taxon>Eurotiomycetes</taxon>
        <taxon>Eurotiomycetidae</taxon>
        <taxon>Eurotiales</taxon>
        <taxon>Aspergillaceae</taxon>
        <taxon>Aspergillus</taxon>
        <taxon>Aspergillus subgen. Fumigati</taxon>
    </lineage>
</organism>
<reference key="1">
    <citation type="journal article" date="2008" name="PLoS Genet.">
        <title>Genomic islands in the pathogenic filamentous fungus Aspergillus fumigatus.</title>
        <authorList>
            <person name="Fedorova N.D."/>
            <person name="Khaldi N."/>
            <person name="Joardar V.S."/>
            <person name="Maiti R."/>
            <person name="Amedeo P."/>
            <person name="Anderson M.J."/>
            <person name="Crabtree J."/>
            <person name="Silva J.C."/>
            <person name="Badger J.H."/>
            <person name="Albarraq A."/>
            <person name="Angiuoli S."/>
            <person name="Bussey H."/>
            <person name="Bowyer P."/>
            <person name="Cotty P.J."/>
            <person name="Dyer P.S."/>
            <person name="Egan A."/>
            <person name="Galens K."/>
            <person name="Fraser-Liggett C.M."/>
            <person name="Haas B.J."/>
            <person name="Inman J.M."/>
            <person name="Kent R."/>
            <person name="Lemieux S."/>
            <person name="Malavazi I."/>
            <person name="Orvis J."/>
            <person name="Roemer T."/>
            <person name="Ronning C.M."/>
            <person name="Sundaram J.P."/>
            <person name="Sutton G."/>
            <person name="Turner G."/>
            <person name="Venter J.C."/>
            <person name="White O.R."/>
            <person name="Whitty B.R."/>
            <person name="Youngman P."/>
            <person name="Wolfe K.H."/>
            <person name="Goldman G.H."/>
            <person name="Wortman J.R."/>
            <person name="Jiang B."/>
            <person name="Denning D.W."/>
            <person name="Nierman W.C."/>
        </authorList>
    </citation>
    <scope>NUCLEOTIDE SEQUENCE [LARGE SCALE GENOMIC DNA]</scope>
    <source>
        <strain>CBS 144.89 / FGSC A1163 / CEA10</strain>
    </source>
</reference>